<accession>P27991</accession>
<comment type="function">
    <text evidence="2">This is a key enzyme of plant metabolism catalyzing the first reaction in the biosynthesis from L-phenylalanine of a wide variety of natural products based on the phenylpropane skeleton.</text>
</comment>
<comment type="catalytic activity">
    <reaction evidence="2">
        <text>L-phenylalanine = (E)-cinnamate + NH4(+)</text>
        <dbReference type="Rhea" id="RHEA:21384"/>
        <dbReference type="ChEBI" id="CHEBI:15669"/>
        <dbReference type="ChEBI" id="CHEBI:28938"/>
        <dbReference type="ChEBI" id="CHEBI:58095"/>
        <dbReference type="EC" id="4.3.1.24"/>
    </reaction>
</comment>
<comment type="pathway">
    <text evidence="5">Phenylpropanoid metabolism; trans-cinnamate biosynthesis; trans-cinnamate from L-phenylalanine: step 1/1.</text>
</comment>
<comment type="subunit">
    <text evidence="2">Homotetramer.</text>
</comment>
<comment type="subcellular location">
    <subcellularLocation>
        <location evidence="5">Cytoplasm</location>
    </subcellularLocation>
</comment>
<comment type="PTM">
    <text evidence="3">Contains an active site 4-methylidene-imidazol-5-one (MIO), which is formed autocatalytically by cyclization and dehydration of residues Ala-Ser-Gly.</text>
</comment>
<comment type="similarity">
    <text evidence="5">Belongs to the PAL/histidase family.</text>
</comment>
<reference key="1">
    <citation type="journal article" date="1991" name="DNA Seq.">
        <title>Sequence and structure of a phenylalanine ammonia-lyase gene from Glycine max.</title>
        <authorList>
            <person name="Frank R.L."/>
            <person name="Vodkin L.O."/>
        </authorList>
    </citation>
    <scope>NUCLEOTIDE SEQUENCE [GENOMIC DNA]</scope>
    <source>
        <strain>cv. T225</strain>
        <tissue>Leaf</tissue>
    </source>
</reference>
<protein>
    <recommendedName>
        <fullName>Phenylalanine ammonia-lyase 1</fullName>
        <ecNumber evidence="2">4.3.1.24</ecNumber>
    </recommendedName>
</protein>
<feature type="chain" id="PRO_0000215421" description="Phenylalanine ammonia-lyase 1">
    <location>
        <begin position="1"/>
        <end position="713"/>
    </location>
</feature>
<feature type="active site" description="Proton donor/acceptor" evidence="3">
    <location>
        <position position="105"/>
    </location>
</feature>
<feature type="binding site" evidence="3">
    <location>
        <position position="257"/>
    </location>
    <ligand>
        <name>(E)-cinnamate</name>
        <dbReference type="ChEBI" id="CHEBI:15669"/>
    </ligand>
</feature>
<feature type="binding site" evidence="3">
    <location>
        <position position="345"/>
    </location>
    <ligand>
        <name>(E)-cinnamate</name>
        <dbReference type="ChEBI" id="CHEBI:15669"/>
    </ligand>
</feature>
<feature type="binding site" evidence="3">
    <location>
        <position position="351"/>
    </location>
    <ligand>
        <name>(E)-cinnamate</name>
        <dbReference type="ChEBI" id="CHEBI:15669"/>
    </ligand>
</feature>
<feature type="binding site" evidence="3">
    <location>
        <position position="381"/>
    </location>
    <ligand>
        <name>(E)-cinnamate</name>
        <dbReference type="ChEBI" id="CHEBI:15669"/>
    </ligand>
</feature>
<feature type="binding site" evidence="1">
    <location>
        <position position="453"/>
    </location>
    <ligand>
        <name>(E)-cinnamate</name>
        <dbReference type="ChEBI" id="CHEBI:15669"/>
    </ligand>
</feature>
<feature type="binding site" evidence="1">
    <location>
        <position position="481"/>
    </location>
    <ligand>
        <name>(E)-cinnamate</name>
        <dbReference type="ChEBI" id="CHEBI:15669"/>
    </ligand>
</feature>
<feature type="binding site" evidence="3">
    <location>
        <position position="484"/>
    </location>
    <ligand>
        <name>(E)-cinnamate</name>
        <dbReference type="ChEBI" id="CHEBI:15669"/>
    </ligand>
</feature>
<feature type="modified residue" description="2,3-didehydroalanine (Ser)" evidence="4">
    <location>
        <position position="200"/>
    </location>
</feature>
<feature type="cross-link" description="5-imidazolinone (Ala-Gly)" evidence="3">
    <location>
        <begin position="199"/>
        <end position="201"/>
    </location>
</feature>
<evidence type="ECO:0000250" key="1">
    <source>
        <dbReference type="UniProtKB" id="P11544"/>
    </source>
</evidence>
<evidence type="ECO:0000250" key="2">
    <source>
        <dbReference type="UniProtKB" id="P24481"/>
    </source>
</evidence>
<evidence type="ECO:0000250" key="3">
    <source>
        <dbReference type="UniProtKB" id="Q68G84"/>
    </source>
</evidence>
<evidence type="ECO:0000255" key="4">
    <source>
        <dbReference type="PROSITE-ProRule" id="PRU10122"/>
    </source>
</evidence>
<evidence type="ECO:0000305" key="5"/>
<organism>
    <name type="scientific">Glycine max</name>
    <name type="common">Soybean</name>
    <name type="synonym">Glycine hispida</name>
    <dbReference type="NCBI Taxonomy" id="3847"/>
    <lineage>
        <taxon>Eukaryota</taxon>
        <taxon>Viridiplantae</taxon>
        <taxon>Streptophyta</taxon>
        <taxon>Embryophyta</taxon>
        <taxon>Tracheophyta</taxon>
        <taxon>Spermatophyta</taxon>
        <taxon>Magnoliopsida</taxon>
        <taxon>eudicotyledons</taxon>
        <taxon>Gunneridae</taxon>
        <taxon>Pentapetalae</taxon>
        <taxon>rosids</taxon>
        <taxon>fabids</taxon>
        <taxon>Fabales</taxon>
        <taxon>Fabaceae</taxon>
        <taxon>Papilionoideae</taxon>
        <taxon>50 kb inversion clade</taxon>
        <taxon>NPAAA clade</taxon>
        <taxon>indigoferoid/millettioid clade</taxon>
        <taxon>Phaseoleae</taxon>
        <taxon>Glycine</taxon>
        <taxon>Glycine subgen. Soja</taxon>
    </lineage>
</organism>
<proteinExistence type="inferred from homology"/>
<keyword id="KW-0963">Cytoplasm</keyword>
<keyword id="KW-0456">Lyase</keyword>
<keyword id="KW-0585">Phenylalanine catabolism</keyword>
<keyword id="KW-0587">Phenylpropanoid metabolism</keyword>
<keyword id="KW-1185">Reference proteome</keyword>
<sequence>MEATNGHQNGSFCLSTAKGNNDPLNWGAAAEAMKGSHLDEVKRMVAEYRKPVVRLGGETLTIAQVAAVAGHDHGVAVELSESAREGVKASSEWVMNSMNNGTDSYGVTTGFGATSHRRTKQGGALQKELIRFLNAGIFGNGTESSHTLPHTATRAAMLVRINTLLQGYSGIRFEILEAITKLLNNNVTPCLDLRGTITASGDLVPLSYIAGLLTGRPNSKAVGPSGEVLNAKEAFELASINSEFFELQPKEGLALVNGTAVGSGLASMVLFEANILAVLSEVLSAIFAEVMQGKPEFTDHLTHKLKHHPGQIEAAAIMEHILDGSSYMKAAKKLHEIDPLQKPKQDRYALRTSPQWLGPLIEVIRFSTKSIEREINSVNDNPLIDVSRNKALHGGNFQGTPIGVSMDNTRLALASIGKLMFAQFSELVNDFYNNGLPSNLTASRNPSLDYGFKGAEIAMASYCSELQYLANPVTTHVQSAEQHNQDVNSLGLISSRKTNEAIEILKLMSSTFLIALCQAIDLRHLEENLKNSVKNTVSQVSKRILTTGVNGELHPSRFCEKDLLKVVDREYIFSYIDDPCSATYPLMQKLRQVLVDHALVNAECEKDVNSSIFQKIAIFEEELKNLLPKEVEGARAAYESGKAAIPNKIQECRSYPLYKFVREELGTGLLTGEKVRSPGEEFDKLFTAMCQGKIIDPLMECLGEWNGAPLPIS</sequence>
<gene>
    <name type="primary">PAL1</name>
</gene>
<dbReference type="EC" id="4.3.1.24" evidence="2"/>
<dbReference type="EMBL" id="X52953">
    <property type="protein sequence ID" value="CAA37129.1"/>
    <property type="molecule type" value="Genomic_DNA"/>
</dbReference>
<dbReference type="PIR" id="S22991">
    <property type="entry name" value="S22991"/>
</dbReference>
<dbReference type="SMR" id="P27991"/>
<dbReference type="FunCoup" id="P27991">
    <property type="interactions" value="648"/>
</dbReference>
<dbReference type="STRING" id="3847.P27991"/>
<dbReference type="PaxDb" id="3847-GLYMA03G33890.1"/>
<dbReference type="eggNOG" id="KOG0222">
    <property type="taxonomic scope" value="Eukaryota"/>
</dbReference>
<dbReference type="InParanoid" id="P27991"/>
<dbReference type="SABIO-RK" id="P27991"/>
<dbReference type="UniPathway" id="UPA00713">
    <property type="reaction ID" value="UER00725"/>
</dbReference>
<dbReference type="Proteomes" id="UP000008827">
    <property type="component" value="Unplaced"/>
</dbReference>
<dbReference type="GO" id="GO:0005737">
    <property type="term" value="C:cytoplasm"/>
    <property type="evidence" value="ECO:0007669"/>
    <property type="project" value="UniProtKB-SubCell"/>
</dbReference>
<dbReference type="GO" id="GO:0045548">
    <property type="term" value="F:phenylalanine ammonia-lyase activity"/>
    <property type="evidence" value="ECO:0000318"/>
    <property type="project" value="GO_Central"/>
</dbReference>
<dbReference type="GO" id="GO:0009800">
    <property type="term" value="P:cinnamic acid biosynthetic process"/>
    <property type="evidence" value="ECO:0007669"/>
    <property type="project" value="UniProtKB-UniPathway"/>
</dbReference>
<dbReference type="GO" id="GO:0006559">
    <property type="term" value="P:L-phenylalanine catabolic process"/>
    <property type="evidence" value="ECO:0007669"/>
    <property type="project" value="UniProtKB-KW"/>
</dbReference>
<dbReference type="CDD" id="cd00332">
    <property type="entry name" value="PAL-HAL"/>
    <property type="match status" value="1"/>
</dbReference>
<dbReference type="FunFam" id="1.10.274.20:FF:000001">
    <property type="entry name" value="Phenylalanine ammonia-lyase"/>
    <property type="match status" value="1"/>
</dbReference>
<dbReference type="FunFam" id="1.10.275.10:FF:000009">
    <property type="entry name" value="Phenylalanine ammonia-lyase"/>
    <property type="match status" value="1"/>
</dbReference>
<dbReference type="FunFam" id="1.20.200.10:FF:000009">
    <property type="entry name" value="Phenylalanine ammonia-lyase"/>
    <property type="match status" value="1"/>
</dbReference>
<dbReference type="Gene3D" id="1.20.200.10">
    <property type="entry name" value="Fumarase/aspartase (Central domain)"/>
    <property type="match status" value="1"/>
</dbReference>
<dbReference type="Gene3D" id="1.10.275.10">
    <property type="entry name" value="Fumarase/aspartase (N-terminal domain)"/>
    <property type="match status" value="1"/>
</dbReference>
<dbReference type="Gene3D" id="1.10.274.20">
    <property type="entry name" value="Phenylalanine ammonia-lyase 1, domain 3"/>
    <property type="match status" value="1"/>
</dbReference>
<dbReference type="InterPro" id="IPR001106">
    <property type="entry name" value="Aromatic_Lyase"/>
</dbReference>
<dbReference type="InterPro" id="IPR024083">
    <property type="entry name" value="Fumarase/histidase_N"/>
</dbReference>
<dbReference type="InterPro" id="IPR008948">
    <property type="entry name" value="L-Aspartase-like"/>
</dbReference>
<dbReference type="InterPro" id="IPR022313">
    <property type="entry name" value="Phe/His_NH3-lyase_AS"/>
</dbReference>
<dbReference type="InterPro" id="IPR005922">
    <property type="entry name" value="Phe_NH3-lyase"/>
</dbReference>
<dbReference type="InterPro" id="IPR023144">
    <property type="entry name" value="Phe_NH3-lyase_shielding_dom_sf"/>
</dbReference>
<dbReference type="NCBIfam" id="TIGR01226">
    <property type="entry name" value="phe_am_lyase"/>
    <property type="match status" value="1"/>
</dbReference>
<dbReference type="PANTHER" id="PTHR10362">
    <property type="entry name" value="HISTIDINE AMMONIA-LYASE"/>
    <property type="match status" value="1"/>
</dbReference>
<dbReference type="Pfam" id="PF00221">
    <property type="entry name" value="Lyase_aromatic"/>
    <property type="match status" value="1"/>
</dbReference>
<dbReference type="SUPFAM" id="SSF48557">
    <property type="entry name" value="L-aspartase-like"/>
    <property type="match status" value="1"/>
</dbReference>
<dbReference type="PROSITE" id="PS00488">
    <property type="entry name" value="PAL_HISTIDASE"/>
    <property type="match status" value="1"/>
</dbReference>
<name>PAL1_SOYBN</name>